<evidence type="ECO:0000255" key="1">
    <source>
        <dbReference type="HAMAP-Rule" id="MF_00144"/>
    </source>
</evidence>
<keyword id="KW-0067">ATP-binding</keyword>
<keyword id="KW-0963">Cytoplasm</keyword>
<keyword id="KW-1015">Disulfide bond</keyword>
<keyword id="KW-0547">Nucleotide-binding</keyword>
<keyword id="KW-1185">Reference proteome</keyword>
<keyword id="KW-0694">RNA-binding</keyword>
<keyword id="KW-0808">Transferase</keyword>
<keyword id="KW-0819">tRNA processing</keyword>
<keyword id="KW-0820">tRNA-binding</keyword>
<name>MNMA_BORA1</name>
<comment type="function">
    <text evidence="1">Catalyzes the 2-thiolation of uridine at the wobble position (U34) of tRNA, leading to the formation of s(2)U34.</text>
</comment>
<comment type="catalytic activity">
    <reaction evidence="1">
        <text>S-sulfanyl-L-cysteinyl-[protein] + uridine(34) in tRNA + AH2 + ATP = 2-thiouridine(34) in tRNA + L-cysteinyl-[protein] + A + AMP + diphosphate + H(+)</text>
        <dbReference type="Rhea" id="RHEA:47032"/>
        <dbReference type="Rhea" id="RHEA-COMP:10131"/>
        <dbReference type="Rhea" id="RHEA-COMP:11726"/>
        <dbReference type="Rhea" id="RHEA-COMP:11727"/>
        <dbReference type="Rhea" id="RHEA-COMP:11728"/>
        <dbReference type="ChEBI" id="CHEBI:13193"/>
        <dbReference type="ChEBI" id="CHEBI:15378"/>
        <dbReference type="ChEBI" id="CHEBI:17499"/>
        <dbReference type="ChEBI" id="CHEBI:29950"/>
        <dbReference type="ChEBI" id="CHEBI:30616"/>
        <dbReference type="ChEBI" id="CHEBI:33019"/>
        <dbReference type="ChEBI" id="CHEBI:61963"/>
        <dbReference type="ChEBI" id="CHEBI:65315"/>
        <dbReference type="ChEBI" id="CHEBI:87170"/>
        <dbReference type="ChEBI" id="CHEBI:456215"/>
        <dbReference type="EC" id="2.8.1.13"/>
    </reaction>
</comment>
<comment type="subcellular location">
    <subcellularLocation>
        <location evidence="1">Cytoplasm</location>
    </subcellularLocation>
</comment>
<comment type="similarity">
    <text evidence="1">Belongs to the MnmA/TRMU family.</text>
</comment>
<feature type="chain" id="PRO_0000349539" description="tRNA-specific 2-thiouridylase MnmA">
    <location>
        <begin position="1"/>
        <end position="370"/>
    </location>
</feature>
<feature type="region of interest" description="Interaction with target base in tRNA" evidence="1">
    <location>
        <begin position="100"/>
        <end position="102"/>
    </location>
</feature>
<feature type="region of interest" description="Interaction with tRNA" evidence="1">
    <location>
        <begin position="155"/>
        <end position="157"/>
    </location>
</feature>
<feature type="region of interest" description="Interaction with tRNA" evidence="1">
    <location>
        <begin position="321"/>
        <end position="322"/>
    </location>
</feature>
<feature type="active site" description="Nucleophile" evidence="1">
    <location>
        <position position="105"/>
    </location>
</feature>
<feature type="active site" description="Cysteine persulfide intermediate" evidence="1">
    <location>
        <position position="205"/>
    </location>
</feature>
<feature type="binding site" evidence="1">
    <location>
        <begin position="14"/>
        <end position="21"/>
    </location>
    <ligand>
        <name>ATP</name>
        <dbReference type="ChEBI" id="CHEBI:30616"/>
    </ligand>
</feature>
<feature type="binding site" evidence="1">
    <location>
        <position position="40"/>
    </location>
    <ligand>
        <name>ATP</name>
        <dbReference type="ChEBI" id="CHEBI:30616"/>
    </ligand>
</feature>
<feature type="binding site" evidence="1">
    <location>
        <position position="129"/>
    </location>
    <ligand>
        <name>ATP</name>
        <dbReference type="ChEBI" id="CHEBI:30616"/>
    </ligand>
</feature>
<feature type="site" description="Interaction with tRNA" evidence="1">
    <location>
        <position position="130"/>
    </location>
</feature>
<feature type="site" description="Interaction with tRNA" evidence="1">
    <location>
        <position position="353"/>
    </location>
</feature>
<feature type="disulfide bond" description="Alternate" evidence="1">
    <location>
        <begin position="105"/>
        <end position="205"/>
    </location>
</feature>
<reference key="1">
    <citation type="journal article" date="2006" name="J. Bacteriol.">
        <title>Comparison of the genome sequence of the poultry pathogen Bordetella avium with those of B. bronchiseptica, B. pertussis, and B. parapertussis reveals extensive diversity in surface structures associated with host interaction.</title>
        <authorList>
            <person name="Sebaihia M."/>
            <person name="Preston A."/>
            <person name="Maskell D.J."/>
            <person name="Kuzmiak H."/>
            <person name="Connell T.D."/>
            <person name="King N.D."/>
            <person name="Orndorff P.E."/>
            <person name="Miyamoto D.M."/>
            <person name="Thomson N.R."/>
            <person name="Harris D."/>
            <person name="Goble A."/>
            <person name="Lord A."/>
            <person name="Murphy L."/>
            <person name="Quail M.A."/>
            <person name="Rutter S."/>
            <person name="Squares R."/>
            <person name="Squares S."/>
            <person name="Woodward J."/>
            <person name="Parkhill J."/>
            <person name="Temple L.M."/>
        </authorList>
    </citation>
    <scope>NUCLEOTIDE SEQUENCE [LARGE SCALE GENOMIC DNA]</scope>
    <source>
        <strain>197N</strain>
    </source>
</reference>
<accession>Q2KZ71</accession>
<dbReference type="EC" id="2.8.1.13" evidence="1"/>
<dbReference type="EMBL" id="AM167904">
    <property type="protein sequence ID" value="CAJ49755.1"/>
    <property type="molecule type" value="Genomic_DNA"/>
</dbReference>
<dbReference type="RefSeq" id="WP_012417810.1">
    <property type="nucleotide sequence ID" value="NC_010645.1"/>
</dbReference>
<dbReference type="SMR" id="Q2KZ71"/>
<dbReference type="STRING" id="360910.BAV2145"/>
<dbReference type="GeneID" id="92934793"/>
<dbReference type="KEGG" id="bav:BAV2145"/>
<dbReference type="eggNOG" id="COG0482">
    <property type="taxonomic scope" value="Bacteria"/>
</dbReference>
<dbReference type="HOGENOM" id="CLU_035188_1_0_4"/>
<dbReference type="OrthoDB" id="9800696at2"/>
<dbReference type="Proteomes" id="UP000001977">
    <property type="component" value="Chromosome"/>
</dbReference>
<dbReference type="GO" id="GO:0005737">
    <property type="term" value="C:cytoplasm"/>
    <property type="evidence" value="ECO:0007669"/>
    <property type="project" value="UniProtKB-SubCell"/>
</dbReference>
<dbReference type="GO" id="GO:0005524">
    <property type="term" value="F:ATP binding"/>
    <property type="evidence" value="ECO:0007669"/>
    <property type="project" value="UniProtKB-KW"/>
</dbReference>
<dbReference type="GO" id="GO:0000049">
    <property type="term" value="F:tRNA binding"/>
    <property type="evidence" value="ECO:0007669"/>
    <property type="project" value="UniProtKB-KW"/>
</dbReference>
<dbReference type="GO" id="GO:0103016">
    <property type="term" value="F:tRNA-uridine 2-sulfurtransferase activity"/>
    <property type="evidence" value="ECO:0007669"/>
    <property type="project" value="UniProtKB-EC"/>
</dbReference>
<dbReference type="GO" id="GO:0002143">
    <property type="term" value="P:tRNA wobble position uridine thiolation"/>
    <property type="evidence" value="ECO:0007669"/>
    <property type="project" value="TreeGrafter"/>
</dbReference>
<dbReference type="CDD" id="cd01998">
    <property type="entry name" value="MnmA_TRMU-like"/>
    <property type="match status" value="1"/>
</dbReference>
<dbReference type="FunFam" id="2.30.30.280:FF:000001">
    <property type="entry name" value="tRNA-specific 2-thiouridylase MnmA"/>
    <property type="match status" value="1"/>
</dbReference>
<dbReference type="FunFam" id="2.40.30.10:FF:000023">
    <property type="entry name" value="tRNA-specific 2-thiouridylase MnmA"/>
    <property type="match status" value="1"/>
</dbReference>
<dbReference type="FunFam" id="3.40.50.620:FF:000004">
    <property type="entry name" value="tRNA-specific 2-thiouridylase MnmA"/>
    <property type="match status" value="1"/>
</dbReference>
<dbReference type="Gene3D" id="2.30.30.280">
    <property type="entry name" value="Adenine nucleotide alpha hydrolases-like domains"/>
    <property type="match status" value="1"/>
</dbReference>
<dbReference type="Gene3D" id="3.40.50.620">
    <property type="entry name" value="HUPs"/>
    <property type="match status" value="1"/>
</dbReference>
<dbReference type="Gene3D" id="2.40.30.10">
    <property type="entry name" value="Translation factors"/>
    <property type="match status" value="1"/>
</dbReference>
<dbReference type="HAMAP" id="MF_00144">
    <property type="entry name" value="tRNA_thiouridyl_MnmA"/>
    <property type="match status" value="1"/>
</dbReference>
<dbReference type="InterPro" id="IPR004506">
    <property type="entry name" value="MnmA-like"/>
</dbReference>
<dbReference type="InterPro" id="IPR046885">
    <property type="entry name" value="MnmA-like_C"/>
</dbReference>
<dbReference type="InterPro" id="IPR046884">
    <property type="entry name" value="MnmA-like_central"/>
</dbReference>
<dbReference type="InterPro" id="IPR023382">
    <property type="entry name" value="MnmA-like_central_sf"/>
</dbReference>
<dbReference type="InterPro" id="IPR014729">
    <property type="entry name" value="Rossmann-like_a/b/a_fold"/>
</dbReference>
<dbReference type="NCBIfam" id="NF001138">
    <property type="entry name" value="PRK00143.1"/>
    <property type="match status" value="1"/>
</dbReference>
<dbReference type="NCBIfam" id="TIGR00420">
    <property type="entry name" value="trmU"/>
    <property type="match status" value="1"/>
</dbReference>
<dbReference type="PANTHER" id="PTHR11933:SF5">
    <property type="entry name" value="MITOCHONDRIAL TRNA-SPECIFIC 2-THIOURIDYLASE 1"/>
    <property type="match status" value="1"/>
</dbReference>
<dbReference type="PANTHER" id="PTHR11933">
    <property type="entry name" value="TRNA 5-METHYLAMINOMETHYL-2-THIOURIDYLATE -METHYLTRANSFERASE"/>
    <property type="match status" value="1"/>
</dbReference>
<dbReference type="Pfam" id="PF03054">
    <property type="entry name" value="tRNA_Me_trans"/>
    <property type="match status" value="1"/>
</dbReference>
<dbReference type="Pfam" id="PF20258">
    <property type="entry name" value="tRNA_Me_trans_C"/>
    <property type="match status" value="1"/>
</dbReference>
<dbReference type="Pfam" id="PF20259">
    <property type="entry name" value="tRNA_Me_trans_M"/>
    <property type="match status" value="1"/>
</dbReference>
<dbReference type="SUPFAM" id="SSF52402">
    <property type="entry name" value="Adenine nucleotide alpha hydrolases-like"/>
    <property type="match status" value="1"/>
</dbReference>
<protein>
    <recommendedName>
        <fullName evidence="1">tRNA-specific 2-thiouridylase MnmA</fullName>
        <ecNumber evidence="1">2.8.1.13</ecNumber>
    </recommendedName>
</protein>
<gene>
    <name evidence="1" type="primary">mnmA</name>
    <name type="ordered locus">BAV2145</name>
</gene>
<sequence length="370" mass="40956">MVQTLQKKGRVVVGMSGGVDSSVTAWLLKQQGYEVVGLFMKNWEDDDDSEYCSTRQDLLDAASVADLIGVEFEYVNFASEYKDRVFADFLREYSAGRTPNPDVLCNAEIKFKAFLDHAMSLGAEHIATGHYARVRAVDTARGQRFQLLKALDASKDQSYFLHRLNQAQLSRTLFPLGELHKTEVRRIAHEIGLHNAAKKDSTGICFIGERPFREFLNRYLPTAPGPILTPEGRRLGQHHGLAFYTLGQRKGLGIGGVKGQQREDGTADAWYSARKDLKNNALYVVQGHDHPWLLSDTLRAQDVNWVDGEAPAAGAYAAKTRYRQADAPCELRADEAGFDLSFAQAQWAVTPGQSAVLYDGDVCLGGGIII</sequence>
<proteinExistence type="inferred from homology"/>
<organism>
    <name type="scientific">Bordetella avium (strain 197N)</name>
    <dbReference type="NCBI Taxonomy" id="360910"/>
    <lineage>
        <taxon>Bacteria</taxon>
        <taxon>Pseudomonadati</taxon>
        <taxon>Pseudomonadota</taxon>
        <taxon>Betaproteobacteria</taxon>
        <taxon>Burkholderiales</taxon>
        <taxon>Alcaligenaceae</taxon>
        <taxon>Bordetella</taxon>
    </lineage>
</organism>